<reference key="1">
    <citation type="submission" date="2008-04" db="EMBL/GenBank/DDBJ databases">
        <title>Complete sequence of Clostridium botulinum strain Eklund.</title>
        <authorList>
            <person name="Brinkac L.M."/>
            <person name="Brown J.L."/>
            <person name="Bruce D."/>
            <person name="Detter C."/>
            <person name="Munk C."/>
            <person name="Smith L.A."/>
            <person name="Smith T.J."/>
            <person name="Sutton G."/>
            <person name="Brettin T.S."/>
        </authorList>
    </citation>
    <scope>NUCLEOTIDE SEQUENCE [LARGE SCALE GENOMIC DNA]</scope>
    <source>
        <strain>Eklund 17B / Type B</strain>
    </source>
</reference>
<organism>
    <name type="scientific">Clostridium botulinum (strain Eklund 17B / Type B)</name>
    <dbReference type="NCBI Taxonomy" id="935198"/>
    <lineage>
        <taxon>Bacteria</taxon>
        <taxon>Bacillati</taxon>
        <taxon>Bacillota</taxon>
        <taxon>Clostridia</taxon>
        <taxon>Eubacteriales</taxon>
        <taxon>Clostridiaceae</taxon>
        <taxon>Clostridium</taxon>
    </lineage>
</organism>
<sequence>MILSGKEILKHIGEDIVIEPFSEERINPNSYNLTLFNELLVYKNETLDMKIPNETEKLIIPEEGLLLEPGKLYLGRTNEFTQTNKYVPMLEGRSSTGRLGLFIHVTAGFGDIGFAGYWTLEIFCVQPIKIYPNTEICQIYYHNIDGEYDLYNSGKYQNNNGIQPSLMYKDFEK</sequence>
<comment type="function">
    <text evidence="1">Bifunctional enzyme that catalyzes both the deamination of dCTP to dUTP and the hydrolysis of dUTP to dUMP without releasing the toxic dUTP intermediate.</text>
</comment>
<comment type="catalytic activity">
    <reaction evidence="1">
        <text>dCTP + 2 H2O = dUMP + NH4(+) + diphosphate</text>
        <dbReference type="Rhea" id="RHEA:19205"/>
        <dbReference type="ChEBI" id="CHEBI:15377"/>
        <dbReference type="ChEBI" id="CHEBI:28938"/>
        <dbReference type="ChEBI" id="CHEBI:33019"/>
        <dbReference type="ChEBI" id="CHEBI:61481"/>
        <dbReference type="ChEBI" id="CHEBI:246422"/>
        <dbReference type="EC" id="3.5.4.30"/>
    </reaction>
</comment>
<comment type="pathway">
    <text evidence="1">Pyrimidine metabolism; dUMP biosynthesis; dUMP from dCTP: step 1/1.</text>
</comment>
<comment type="subunit">
    <text evidence="1">Homotrimer.</text>
</comment>
<comment type="similarity">
    <text evidence="1">Belongs to the dCTP deaminase family.</text>
</comment>
<accession>B2TNM9</accession>
<protein>
    <recommendedName>
        <fullName evidence="1">dCTP deaminase, dUMP-forming</fullName>
        <ecNumber evidence="1">3.5.4.30</ecNumber>
    </recommendedName>
    <alternativeName>
        <fullName evidence="1">Bifunctional dCTP deaminase:dUTPase</fullName>
    </alternativeName>
    <alternativeName>
        <fullName evidence="1">DCD-DUT</fullName>
    </alternativeName>
</protein>
<evidence type="ECO:0000255" key="1">
    <source>
        <dbReference type="HAMAP-Rule" id="MF_00146"/>
    </source>
</evidence>
<gene>
    <name evidence="1" type="primary">dcd</name>
    <name type="ordered locus">CLL_A2648</name>
</gene>
<name>DCDB_CLOBB</name>
<dbReference type="EC" id="3.5.4.30" evidence="1"/>
<dbReference type="EMBL" id="CP001056">
    <property type="protein sequence ID" value="ACD24204.1"/>
    <property type="molecule type" value="Genomic_DNA"/>
</dbReference>
<dbReference type="SMR" id="B2TNM9"/>
<dbReference type="KEGG" id="cbk:CLL_A2648"/>
<dbReference type="PATRIC" id="fig|935198.13.peg.2607"/>
<dbReference type="HOGENOM" id="CLU_087476_0_1_9"/>
<dbReference type="UniPathway" id="UPA00610">
    <property type="reaction ID" value="UER00667"/>
</dbReference>
<dbReference type="Proteomes" id="UP000001195">
    <property type="component" value="Chromosome"/>
</dbReference>
<dbReference type="GO" id="GO:0033973">
    <property type="term" value="F:dCTP deaminase (dUMP-forming) activity"/>
    <property type="evidence" value="ECO:0007669"/>
    <property type="project" value="UniProtKB-UniRule"/>
</dbReference>
<dbReference type="GO" id="GO:0008829">
    <property type="term" value="F:dCTP deaminase activity"/>
    <property type="evidence" value="ECO:0007669"/>
    <property type="project" value="InterPro"/>
</dbReference>
<dbReference type="GO" id="GO:0000166">
    <property type="term" value="F:nucleotide binding"/>
    <property type="evidence" value="ECO:0007669"/>
    <property type="project" value="UniProtKB-KW"/>
</dbReference>
<dbReference type="GO" id="GO:0006226">
    <property type="term" value="P:dUMP biosynthetic process"/>
    <property type="evidence" value="ECO:0007669"/>
    <property type="project" value="UniProtKB-UniRule"/>
</dbReference>
<dbReference type="GO" id="GO:0006229">
    <property type="term" value="P:dUTP biosynthetic process"/>
    <property type="evidence" value="ECO:0007669"/>
    <property type="project" value="InterPro"/>
</dbReference>
<dbReference type="GO" id="GO:0015949">
    <property type="term" value="P:nucleobase-containing small molecule interconversion"/>
    <property type="evidence" value="ECO:0007669"/>
    <property type="project" value="TreeGrafter"/>
</dbReference>
<dbReference type="CDD" id="cd07557">
    <property type="entry name" value="trimeric_dUTPase"/>
    <property type="match status" value="1"/>
</dbReference>
<dbReference type="Gene3D" id="2.70.40.10">
    <property type="match status" value="1"/>
</dbReference>
<dbReference type="HAMAP" id="MF_00146">
    <property type="entry name" value="dCTP_deaminase"/>
    <property type="match status" value="1"/>
</dbReference>
<dbReference type="InterPro" id="IPR011962">
    <property type="entry name" value="dCTP_deaminase"/>
</dbReference>
<dbReference type="InterPro" id="IPR036157">
    <property type="entry name" value="dUTPase-like_sf"/>
</dbReference>
<dbReference type="InterPro" id="IPR033704">
    <property type="entry name" value="dUTPase_trimeric"/>
</dbReference>
<dbReference type="NCBIfam" id="TIGR02274">
    <property type="entry name" value="dCTP_deam"/>
    <property type="match status" value="1"/>
</dbReference>
<dbReference type="PANTHER" id="PTHR42680">
    <property type="entry name" value="DCTP DEAMINASE"/>
    <property type="match status" value="1"/>
</dbReference>
<dbReference type="PANTHER" id="PTHR42680:SF3">
    <property type="entry name" value="DCTP DEAMINASE"/>
    <property type="match status" value="1"/>
</dbReference>
<dbReference type="Pfam" id="PF22769">
    <property type="entry name" value="DCD"/>
    <property type="match status" value="1"/>
</dbReference>
<dbReference type="SUPFAM" id="SSF51283">
    <property type="entry name" value="dUTPase-like"/>
    <property type="match status" value="1"/>
</dbReference>
<keyword id="KW-0378">Hydrolase</keyword>
<keyword id="KW-0546">Nucleotide metabolism</keyword>
<keyword id="KW-0547">Nucleotide-binding</keyword>
<proteinExistence type="inferred from homology"/>
<feature type="chain" id="PRO_1000189825" description="dCTP deaminase, dUMP-forming">
    <location>
        <begin position="1"/>
        <end position="173"/>
    </location>
</feature>
<feature type="active site" description="Proton donor/acceptor" evidence="1">
    <location>
        <position position="121"/>
    </location>
</feature>
<feature type="binding site" evidence="1">
    <location>
        <begin position="93"/>
        <end position="98"/>
    </location>
    <ligand>
        <name>dCTP</name>
        <dbReference type="ChEBI" id="CHEBI:61481"/>
    </ligand>
</feature>
<feature type="binding site" evidence="1">
    <location>
        <position position="111"/>
    </location>
    <ligand>
        <name>dCTP</name>
        <dbReference type="ChEBI" id="CHEBI:61481"/>
    </ligand>
</feature>
<feature type="binding site" evidence="1">
    <location>
        <begin position="119"/>
        <end position="121"/>
    </location>
    <ligand>
        <name>dCTP</name>
        <dbReference type="ChEBI" id="CHEBI:61481"/>
    </ligand>
</feature>
<feature type="binding site" evidence="1">
    <location>
        <position position="138"/>
    </location>
    <ligand>
        <name>dCTP</name>
        <dbReference type="ChEBI" id="CHEBI:61481"/>
    </ligand>
</feature>
<feature type="binding site" evidence="1">
    <location>
        <position position="151"/>
    </location>
    <ligand>
        <name>dCTP</name>
        <dbReference type="ChEBI" id="CHEBI:61481"/>
    </ligand>
</feature>
<feature type="site" description="Important for bifunctional activity" evidence="1">
    <location>
        <begin position="108"/>
        <end position="109"/>
    </location>
</feature>